<organism>
    <name type="scientific">Desulfovibrio desulfuricans (strain ATCC 27774 / DSM 6949 / MB)</name>
    <dbReference type="NCBI Taxonomy" id="525146"/>
    <lineage>
        <taxon>Bacteria</taxon>
        <taxon>Pseudomonadati</taxon>
        <taxon>Thermodesulfobacteriota</taxon>
        <taxon>Desulfovibrionia</taxon>
        <taxon>Desulfovibrionales</taxon>
        <taxon>Desulfovibrionaceae</taxon>
        <taxon>Desulfovibrio</taxon>
    </lineage>
</organism>
<sequence length="115" mass="13325">MDIIKKIERENMRLDVPAFRSGDTVKVHLRIVEGEKQRIQIFQGNVIRVKRGTTCATFTVRKISDGVGVERIFPLNSPFIDRVEVVTQGRVRRSRLYYLRALKGKAARIKPRGRF</sequence>
<comment type="function">
    <text evidence="1">This protein is located at the 30S-50S ribosomal subunit interface and may play a role in the structure and function of the aminoacyl-tRNA binding site.</text>
</comment>
<comment type="similarity">
    <text evidence="1">Belongs to the bacterial ribosomal protein bL19 family.</text>
</comment>
<reference key="1">
    <citation type="submission" date="2009-01" db="EMBL/GenBank/DDBJ databases">
        <title>Complete sequence of Desulfovibrio desulfuricans subsp. desulfuricans str. ATCC 27774.</title>
        <authorList>
            <consortium name="US DOE Joint Genome Institute"/>
            <person name="Lucas S."/>
            <person name="Copeland A."/>
            <person name="Lapidus A."/>
            <person name="Glavina del Rio T."/>
            <person name="Tice H."/>
            <person name="Bruce D."/>
            <person name="Goodwin L."/>
            <person name="Pitluck S."/>
            <person name="Sims D."/>
            <person name="Lu M."/>
            <person name="Kiss H."/>
            <person name="Meineke L."/>
            <person name="Brettin T."/>
            <person name="Detter J.C."/>
            <person name="Han C."/>
            <person name="Larimer F."/>
            <person name="Land M."/>
            <person name="Hauser L."/>
            <person name="Kyrpides N."/>
            <person name="Ovchinnikova G."/>
            <person name="Hazen T.C."/>
        </authorList>
    </citation>
    <scope>NUCLEOTIDE SEQUENCE [LARGE SCALE GENOMIC DNA]</scope>
    <source>
        <strain>ATCC 27774 / DSM 6949 / MB</strain>
    </source>
</reference>
<feature type="chain" id="PRO_1000134568" description="Large ribosomal subunit protein bL19">
    <location>
        <begin position="1"/>
        <end position="115"/>
    </location>
</feature>
<proteinExistence type="inferred from homology"/>
<protein>
    <recommendedName>
        <fullName evidence="1">Large ribosomal subunit protein bL19</fullName>
    </recommendedName>
    <alternativeName>
        <fullName evidence="2">50S ribosomal protein L19</fullName>
    </alternativeName>
</protein>
<keyword id="KW-0687">Ribonucleoprotein</keyword>
<keyword id="KW-0689">Ribosomal protein</keyword>
<evidence type="ECO:0000255" key="1">
    <source>
        <dbReference type="HAMAP-Rule" id="MF_00402"/>
    </source>
</evidence>
<evidence type="ECO:0000305" key="2"/>
<name>RL19_DESDA</name>
<dbReference type="EMBL" id="CP001358">
    <property type="protein sequence ID" value="ACL49687.1"/>
    <property type="molecule type" value="Genomic_DNA"/>
</dbReference>
<dbReference type="SMR" id="B8J1S9"/>
<dbReference type="STRING" id="525146.Ddes_1790"/>
<dbReference type="KEGG" id="dds:Ddes_1790"/>
<dbReference type="eggNOG" id="COG0335">
    <property type="taxonomic scope" value="Bacteria"/>
</dbReference>
<dbReference type="HOGENOM" id="CLU_103507_2_2_7"/>
<dbReference type="GO" id="GO:0022625">
    <property type="term" value="C:cytosolic large ribosomal subunit"/>
    <property type="evidence" value="ECO:0007669"/>
    <property type="project" value="TreeGrafter"/>
</dbReference>
<dbReference type="GO" id="GO:0003735">
    <property type="term" value="F:structural constituent of ribosome"/>
    <property type="evidence" value="ECO:0007669"/>
    <property type="project" value="InterPro"/>
</dbReference>
<dbReference type="GO" id="GO:0006412">
    <property type="term" value="P:translation"/>
    <property type="evidence" value="ECO:0007669"/>
    <property type="project" value="UniProtKB-UniRule"/>
</dbReference>
<dbReference type="FunFam" id="2.30.30.790:FF:000001">
    <property type="entry name" value="50S ribosomal protein L19"/>
    <property type="match status" value="1"/>
</dbReference>
<dbReference type="Gene3D" id="2.30.30.790">
    <property type="match status" value="1"/>
</dbReference>
<dbReference type="HAMAP" id="MF_00402">
    <property type="entry name" value="Ribosomal_bL19"/>
    <property type="match status" value="1"/>
</dbReference>
<dbReference type="InterPro" id="IPR001857">
    <property type="entry name" value="Ribosomal_bL19"/>
</dbReference>
<dbReference type="InterPro" id="IPR018257">
    <property type="entry name" value="Ribosomal_bL19_CS"/>
</dbReference>
<dbReference type="InterPro" id="IPR038657">
    <property type="entry name" value="Ribosomal_bL19_sf"/>
</dbReference>
<dbReference type="InterPro" id="IPR008991">
    <property type="entry name" value="Translation_prot_SH3-like_sf"/>
</dbReference>
<dbReference type="NCBIfam" id="TIGR01024">
    <property type="entry name" value="rplS_bact"/>
    <property type="match status" value="1"/>
</dbReference>
<dbReference type="PANTHER" id="PTHR15680:SF9">
    <property type="entry name" value="LARGE RIBOSOMAL SUBUNIT PROTEIN BL19M"/>
    <property type="match status" value="1"/>
</dbReference>
<dbReference type="PANTHER" id="PTHR15680">
    <property type="entry name" value="RIBOSOMAL PROTEIN L19"/>
    <property type="match status" value="1"/>
</dbReference>
<dbReference type="Pfam" id="PF01245">
    <property type="entry name" value="Ribosomal_L19"/>
    <property type="match status" value="1"/>
</dbReference>
<dbReference type="PIRSF" id="PIRSF002191">
    <property type="entry name" value="Ribosomal_L19"/>
    <property type="match status" value="1"/>
</dbReference>
<dbReference type="PRINTS" id="PR00061">
    <property type="entry name" value="RIBOSOMALL19"/>
</dbReference>
<dbReference type="SUPFAM" id="SSF50104">
    <property type="entry name" value="Translation proteins SH3-like domain"/>
    <property type="match status" value="1"/>
</dbReference>
<dbReference type="PROSITE" id="PS01015">
    <property type="entry name" value="RIBOSOMAL_L19"/>
    <property type="match status" value="1"/>
</dbReference>
<accession>B8J1S9</accession>
<gene>
    <name evidence="1" type="primary">rplS</name>
    <name type="ordered locus">Ddes_1790</name>
</gene>